<gene>
    <name type="primary">PCP4L1</name>
</gene>
<keyword id="KW-0597">Phosphoprotein</keyword>
<keyword id="KW-1185">Reference proteome</keyword>
<evidence type="ECO:0000250" key="1">
    <source>
        <dbReference type="UniProtKB" id="Q6W8Q3"/>
    </source>
</evidence>
<evidence type="ECO:0000256" key="2">
    <source>
        <dbReference type="SAM" id="MobiDB-lite"/>
    </source>
</evidence>
<evidence type="ECO:0000305" key="3"/>
<sequence length="69" mass="7561">MSELNTKTSPATNQAPGPEEKGKAGSAKKTEDEEEEIDIDLTAPETEKAALAIQGKFRRFQKRKKDPSS</sequence>
<dbReference type="EMBL" id="BC122850">
    <property type="protein sequence ID" value="AAI22851.1"/>
    <property type="molecule type" value="mRNA"/>
</dbReference>
<dbReference type="RefSeq" id="NP_001103915.1">
    <property type="nucleotide sequence ID" value="NM_001110445.1"/>
</dbReference>
<dbReference type="SMR" id="A8R4Q8"/>
<dbReference type="FunCoup" id="A8R4Q8">
    <property type="interactions" value="30"/>
</dbReference>
<dbReference type="STRING" id="9913.ENSBTAP00000053101"/>
<dbReference type="PaxDb" id="9913-ENSBTAP00000053101"/>
<dbReference type="Ensembl" id="ENSBTAT00000055137.3">
    <property type="protein sequence ID" value="ENSBTAP00000053101.2"/>
    <property type="gene ID" value="ENSBTAG00000040512.5"/>
</dbReference>
<dbReference type="GeneID" id="100126444"/>
<dbReference type="KEGG" id="bta:100126444"/>
<dbReference type="CTD" id="654790"/>
<dbReference type="VEuPathDB" id="HostDB:ENSBTAG00000040512"/>
<dbReference type="VGNC" id="VGNC:32645">
    <property type="gene designation" value="PCP4L1"/>
</dbReference>
<dbReference type="eggNOG" id="ENOG502SDAE">
    <property type="taxonomic scope" value="Eukaryota"/>
</dbReference>
<dbReference type="GeneTree" id="ENSGT00530000064299"/>
<dbReference type="HOGENOM" id="CLU_202697_0_0_1"/>
<dbReference type="InParanoid" id="A8R4Q8"/>
<dbReference type="OMA" id="MSERGHT"/>
<dbReference type="OrthoDB" id="9944346at2759"/>
<dbReference type="TreeFam" id="TF336068"/>
<dbReference type="Proteomes" id="UP000009136">
    <property type="component" value="Chromosome 3"/>
</dbReference>
<dbReference type="Bgee" id="ENSBTAG00000040512">
    <property type="expression patterns" value="Expressed in floor plate of diencephalon and 95 other cell types or tissues"/>
</dbReference>
<dbReference type="InterPro" id="IPR052142">
    <property type="entry name" value="Calmodulin_Regulator_PCP4-like"/>
</dbReference>
<dbReference type="PANTHER" id="PTHR15359">
    <property type="entry name" value="IG-LIKE DOMAIN-CONTAINING PROTEIN"/>
    <property type="match status" value="1"/>
</dbReference>
<dbReference type="PANTHER" id="PTHR15359:SF5">
    <property type="entry name" value="PURKINJE CELL PROTEIN 4-LIKE PROTEIN 1"/>
    <property type="match status" value="1"/>
</dbReference>
<proteinExistence type="inferred from homology"/>
<name>PC4L1_BOVIN</name>
<accession>A8R4Q8</accession>
<reference key="1">
    <citation type="submission" date="2006-08" db="EMBL/GenBank/DDBJ databases">
        <authorList>
            <consortium name="NIH - Mammalian Gene Collection (MGC) project"/>
        </authorList>
    </citation>
    <scope>NUCLEOTIDE SEQUENCE [LARGE SCALE MRNA]</scope>
    <source>
        <strain>Hereford</strain>
        <tissue>Basal ganglia</tissue>
    </source>
</reference>
<comment type="similarity">
    <text evidence="3">Belongs to the PCP4 family.</text>
</comment>
<feature type="chain" id="PRO_0000331431" description="Purkinje cell protein 4-like protein 1">
    <location>
        <begin position="1"/>
        <end position="69"/>
    </location>
</feature>
<feature type="domain" description="IQ">
    <location>
        <begin position="46"/>
        <end position="69"/>
    </location>
</feature>
<feature type="region of interest" description="Disordered" evidence="2">
    <location>
        <begin position="1"/>
        <end position="47"/>
    </location>
</feature>
<feature type="compositionally biased region" description="Polar residues" evidence="2">
    <location>
        <begin position="1"/>
        <end position="15"/>
    </location>
</feature>
<feature type="compositionally biased region" description="Basic and acidic residues" evidence="2">
    <location>
        <begin position="18"/>
        <end position="31"/>
    </location>
</feature>
<feature type="modified residue" description="Phosphothreonine" evidence="1">
    <location>
        <position position="8"/>
    </location>
</feature>
<organism>
    <name type="scientific">Bos taurus</name>
    <name type="common">Bovine</name>
    <dbReference type="NCBI Taxonomy" id="9913"/>
    <lineage>
        <taxon>Eukaryota</taxon>
        <taxon>Metazoa</taxon>
        <taxon>Chordata</taxon>
        <taxon>Craniata</taxon>
        <taxon>Vertebrata</taxon>
        <taxon>Euteleostomi</taxon>
        <taxon>Mammalia</taxon>
        <taxon>Eutheria</taxon>
        <taxon>Laurasiatheria</taxon>
        <taxon>Artiodactyla</taxon>
        <taxon>Ruminantia</taxon>
        <taxon>Pecora</taxon>
        <taxon>Bovidae</taxon>
        <taxon>Bovinae</taxon>
        <taxon>Bos</taxon>
    </lineage>
</organism>
<protein>
    <recommendedName>
        <fullName>Purkinje cell protein 4-like protein 1</fullName>
        <shortName>PCP4-like protein 1</shortName>
    </recommendedName>
</protein>